<reference key="1">
    <citation type="journal article" date="1987" name="Virology">
        <title>Genetic divergence of the NS genes of avian influenza viruses.</title>
        <authorList>
            <person name="Nakajima K."/>
            <person name="Nobusawa E."/>
            <person name="Ogawa T."/>
            <person name="Nakajima S."/>
        </authorList>
    </citation>
    <scope>NUCLEOTIDE SEQUENCE [GENOMIC RNA]</scope>
</reference>
<protein>
    <recommendedName>
        <fullName>Nuclear export protein</fullName>
        <shortName>NEP</shortName>
    </recommendedName>
    <alternativeName>
        <fullName>Non-structural protein 2</fullName>
        <shortName>NS2</shortName>
    </alternativeName>
</protein>
<comment type="function">
    <text evidence="1">Mediates the nuclear export of encapsidated genomic RNAs (ribonucleoproteins, RNPs). Acts as an adapter between viral RNPs complexes and the nuclear export machinery of the cell. Possesses no intrinsic RNA-binding activity, but includes a C-terminal M1-binding domain. This domain is believed to allow recognition of RNPs to which the M1 protein is bound. Because the M1 protein is not available in large quantities until the later stages of infection, such an indirect recognition mechanism probably ensures that genomic RNPs are not exported from the nucleus before sufficient quantities of viral mRNA and progeny genomic RNA have been synthesized. Furthermore, the RNPs enters the cytoplasm only when they have associated with the M1 protein that is necessary to guide them to the plasma membrane. May down-regulate viral RNA synthesis when overproduced (By similarity).</text>
</comment>
<comment type="subunit">
    <text evidence="1">Binds M1 protein. May interact with human nucleoporin RAB/HRB and exportin XPO1/CRM1 (By similarity).</text>
</comment>
<comment type="subcellular location">
    <subcellularLocation>
        <location evidence="2">Virion</location>
    </subcellularLocation>
    <subcellularLocation>
        <location evidence="1">Host nucleus</location>
    </subcellularLocation>
</comment>
<comment type="alternative products">
    <event type="alternative splicing"/>
    <isoform>
        <id>P08269-1</id>
        <name>NEP</name>
        <name>NS2</name>
        <sequence type="displayed"/>
    </isoform>
    <isoform>
        <id>P08268-1</id>
        <name>NS1</name>
        <sequence type="external"/>
    </isoform>
</comment>
<comment type="miscellaneous">
    <text>Average number present in a viral particle is estimated to be 130-200 molecules.</text>
</comment>
<comment type="similarity">
    <text evidence="2">Belongs to the influenza viruses NEP family.</text>
</comment>
<name>NEP_I76AM</name>
<accession>P08269</accession>
<gene>
    <name type="primary">NS</name>
</gene>
<organism>
    <name type="scientific">Influenza A virus (strain A/Mynah/Haneda-Thai/1976 H3N1)</name>
    <dbReference type="NCBI Taxonomy" id="11444"/>
    <lineage>
        <taxon>Viruses</taxon>
        <taxon>Riboviria</taxon>
        <taxon>Orthornavirae</taxon>
        <taxon>Negarnaviricota</taxon>
        <taxon>Polyploviricotina</taxon>
        <taxon>Insthoviricetes</taxon>
        <taxon>Articulavirales</taxon>
        <taxon>Orthomyxoviridae</taxon>
        <taxon>Alphainfluenzavirus</taxon>
        <taxon>Alphainfluenzavirus influenzae</taxon>
        <taxon>Influenza A virus</taxon>
    </lineage>
</organism>
<sequence length="118" mass="14037">NTVSSFQDILMRMSKMQLGSSSEDLNGMITQFESLKLYRDSLGEAVMRMGDLHSLQSRNGKWREQLSQKFEEIRWLIEEMRHRLKITENSFEQITFMQALQLLLEVEQEIRTFSFQLI</sequence>
<organismHost>
    <name type="scientific">Aves</name>
    <dbReference type="NCBI Taxonomy" id="8782"/>
</organismHost>
<feature type="chain" id="PRO_0000079000" description="Nuclear export protein">
    <location>
        <begin position="1" status="less than"/>
        <end position="118"/>
    </location>
</feature>
<feature type="short sequence motif" description="Nuclear export signal" evidence="1">
    <location>
        <begin position="9"/>
        <end position="18"/>
    </location>
</feature>
<feature type="short sequence motif" description="Nuclear export signal" evidence="1">
    <location>
        <begin position="82"/>
        <end position="91"/>
    </location>
</feature>
<feature type="non-terminal residue">
    <location>
        <position position="1"/>
    </location>
</feature>
<proteinExistence type="inferred from homology"/>
<dbReference type="EMBL" id="M17070">
    <property type="protein sequence ID" value="AAA43549.1"/>
    <property type="molecule type" value="Genomic_RNA"/>
</dbReference>
<dbReference type="SMR" id="P08269"/>
<dbReference type="GO" id="GO:0042025">
    <property type="term" value="C:host cell nucleus"/>
    <property type="evidence" value="ECO:0007669"/>
    <property type="project" value="UniProtKB-SubCell"/>
</dbReference>
<dbReference type="GO" id="GO:0044423">
    <property type="term" value="C:virion component"/>
    <property type="evidence" value="ECO:0007669"/>
    <property type="project" value="UniProtKB-KW"/>
</dbReference>
<dbReference type="GO" id="GO:0039675">
    <property type="term" value="P:exit of virus from host cell nucleus through nuclear pore"/>
    <property type="evidence" value="ECO:0007669"/>
    <property type="project" value="InterPro"/>
</dbReference>
<dbReference type="Gene3D" id="1.10.287.230">
    <property type="match status" value="1"/>
</dbReference>
<dbReference type="InterPro" id="IPR000968">
    <property type="entry name" value="Flu_NS2"/>
</dbReference>
<dbReference type="Pfam" id="PF00601">
    <property type="entry name" value="Flu_NS2"/>
    <property type="match status" value="1"/>
</dbReference>
<dbReference type="SUPFAM" id="SSF101156">
    <property type="entry name" value="Nonstructural protein ns2, Nep, M1-binding domain"/>
    <property type="match status" value="1"/>
</dbReference>
<keyword id="KW-0025">Alternative splicing</keyword>
<keyword id="KW-1048">Host nucleus</keyword>
<keyword id="KW-0945">Host-virus interaction</keyword>
<keyword id="KW-0813">Transport</keyword>
<keyword id="KW-0946">Virion</keyword>
<evidence type="ECO:0000250" key="1"/>
<evidence type="ECO:0000305" key="2"/>